<organism>
    <name type="scientific">Chlorobium phaeovibrioides (strain DSM 265 / 1930)</name>
    <name type="common">Prosthecochloris vibrioformis (strain DSM 265)</name>
    <dbReference type="NCBI Taxonomy" id="290318"/>
    <lineage>
        <taxon>Bacteria</taxon>
        <taxon>Pseudomonadati</taxon>
        <taxon>Chlorobiota</taxon>
        <taxon>Chlorobiia</taxon>
        <taxon>Chlorobiales</taxon>
        <taxon>Chlorobiaceae</taxon>
        <taxon>Chlorobium/Pelodictyon group</taxon>
        <taxon>Chlorobium</taxon>
    </lineage>
</organism>
<keyword id="KW-0004">4Fe-4S</keyword>
<keyword id="KW-0963">Cytoplasm</keyword>
<keyword id="KW-0408">Iron</keyword>
<keyword id="KW-0411">Iron-sulfur</keyword>
<keyword id="KW-0479">Metal-binding</keyword>
<keyword id="KW-0949">S-adenosyl-L-methionine</keyword>
<keyword id="KW-0808">Transferase</keyword>
<accession>A4SFH7</accession>
<protein>
    <recommendedName>
        <fullName evidence="1">Ribosomal protein uS12 methylthiotransferase RimO</fullName>
        <shortName evidence="1">uS12 MTTase</shortName>
        <shortName evidence="1">uS12 methylthiotransferase</shortName>
        <ecNumber evidence="1">2.8.4.4</ecNumber>
    </recommendedName>
    <alternativeName>
        <fullName evidence="1">Ribosomal protein uS12 (aspartate-C(3))-methylthiotransferase</fullName>
    </alternativeName>
    <alternativeName>
        <fullName evidence="1">Ribosome maturation factor RimO</fullName>
    </alternativeName>
</protein>
<reference key="1">
    <citation type="submission" date="2007-03" db="EMBL/GenBank/DDBJ databases">
        <title>Complete sequence of Prosthecochloris vibrioformis DSM 265.</title>
        <authorList>
            <consortium name="US DOE Joint Genome Institute"/>
            <person name="Copeland A."/>
            <person name="Lucas S."/>
            <person name="Lapidus A."/>
            <person name="Barry K."/>
            <person name="Detter J.C."/>
            <person name="Glavina del Rio T."/>
            <person name="Hammon N."/>
            <person name="Israni S."/>
            <person name="Pitluck S."/>
            <person name="Schmutz J."/>
            <person name="Larimer F."/>
            <person name="Land M."/>
            <person name="Hauser L."/>
            <person name="Mikhailova N."/>
            <person name="Li T."/>
            <person name="Overmann J."/>
            <person name="Schuster S.C."/>
            <person name="Bryant D.A."/>
            <person name="Richardson P."/>
        </authorList>
    </citation>
    <scope>NUCLEOTIDE SEQUENCE [LARGE SCALE GENOMIC DNA]</scope>
    <source>
        <strain>DSM 265 / 1930</strain>
    </source>
</reference>
<proteinExistence type="inferred from homology"/>
<dbReference type="EC" id="2.8.4.4" evidence="1"/>
<dbReference type="EMBL" id="CP000607">
    <property type="protein sequence ID" value="ABP37236.1"/>
    <property type="molecule type" value="Genomic_DNA"/>
</dbReference>
<dbReference type="SMR" id="A4SFH7"/>
<dbReference type="STRING" id="290318.Cvib_1224"/>
<dbReference type="KEGG" id="pvi:Cvib_1224"/>
<dbReference type="eggNOG" id="COG0621">
    <property type="taxonomic scope" value="Bacteria"/>
</dbReference>
<dbReference type="HOGENOM" id="CLU_018697_0_1_10"/>
<dbReference type="OrthoDB" id="9805215at2"/>
<dbReference type="GO" id="GO:0005829">
    <property type="term" value="C:cytosol"/>
    <property type="evidence" value="ECO:0007669"/>
    <property type="project" value="TreeGrafter"/>
</dbReference>
<dbReference type="GO" id="GO:0051539">
    <property type="term" value="F:4 iron, 4 sulfur cluster binding"/>
    <property type="evidence" value="ECO:0007669"/>
    <property type="project" value="UniProtKB-UniRule"/>
</dbReference>
<dbReference type="GO" id="GO:0035599">
    <property type="term" value="F:aspartic acid methylthiotransferase activity"/>
    <property type="evidence" value="ECO:0007669"/>
    <property type="project" value="TreeGrafter"/>
</dbReference>
<dbReference type="GO" id="GO:0046872">
    <property type="term" value="F:metal ion binding"/>
    <property type="evidence" value="ECO:0007669"/>
    <property type="project" value="UniProtKB-KW"/>
</dbReference>
<dbReference type="GO" id="GO:0103039">
    <property type="term" value="F:protein methylthiotransferase activity"/>
    <property type="evidence" value="ECO:0007669"/>
    <property type="project" value="UniProtKB-EC"/>
</dbReference>
<dbReference type="GO" id="GO:0006400">
    <property type="term" value="P:tRNA modification"/>
    <property type="evidence" value="ECO:0007669"/>
    <property type="project" value="InterPro"/>
</dbReference>
<dbReference type="CDD" id="cd01335">
    <property type="entry name" value="Radical_SAM"/>
    <property type="match status" value="1"/>
</dbReference>
<dbReference type="FunFam" id="3.80.30.20:FF:000001">
    <property type="entry name" value="tRNA-2-methylthio-N(6)-dimethylallyladenosine synthase 2"/>
    <property type="match status" value="1"/>
</dbReference>
<dbReference type="Gene3D" id="3.40.50.12160">
    <property type="entry name" value="Methylthiotransferase, N-terminal domain"/>
    <property type="match status" value="1"/>
</dbReference>
<dbReference type="Gene3D" id="2.40.50.140">
    <property type="entry name" value="Nucleic acid-binding proteins"/>
    <property type="match status" value="1"/>
</dbReference>
<dbReference type="Gene3D" id="3.80.30.20">
    <property type="entry name" value="tm_1862 like domain"/>
    <property type="match status" value="1"/>
</dbReference>
<dbReference type="HAMAP" id="MF_01865">
    <property type="entry name" value="MTTase_RimO"/>
    <property type="match status" value="1"/>
</dbReference>
<dbReference type="InterPro" id="IPR006638">
    <property type="entry name" value="Elp3/MiaA/NifB-like_rSAM"/>
</dbReference>
<dbReference type="InterPro" id="IPR005839">
    <property type="entry name" value="Methylthiotransferase"/>
</dbReference>
<dbReference type="InterPro" id="IPR020612">
    <property type="entry name" value="Methylthiotransferase_CS"/>
</dbReference>
<dbReference type="InterPro" id="IPR013848">
    <property type="entry name" value="Methylthiotransferase_N"/>
</dbReference>
<dbReference type="InterPro" id="IPR038135">
    <property type="entry name" value="Methylthiotransferase_N_sf"/>
</dbReference>
<dbReference type="InterPro" id="IPR012340">
    <property type="entry name" value="NA-bd_OB-fold"/>
</dbReference>
<dbReference type="InterPro" id="IPR005840">
    <property type="entry name" value="Ribosomal_uS12_MeSTrfase_RimO"/>
</dbReference>
<dbReference type="InterPro" id="IPR007197">
    <property type="entry name" value="rSAM"/>
</dbReference>
<dbReference type="InterPro" id="IPR023404">
    <property type="entry name" value="rSAM_horseshoe"/>
</dbReference>
<dbReference type="InterPro" id="IPR002792">
    <property type="entry name" value="TRAM_dom"/>
</dbReference>
<dbReference type="NCBIfam" id="TIGR01125">
    <property type="entry name" value="30S ribosomal protein S12 methylthiotransferase RimO"/>
    <property type="match status" value="1"/>
</dbReference>
<dbReference type="NCBIfam" id="TIGR00089">
    <property type="entry name" value="MiaB/RimO family radical SAM methylthiotransferase"/>
    <property type="match status" value="1"/>
</dbReference>
<dbReference type="PANTHER" id="PTHR43837">
    <property type="entry name" value="RIBOSOMAL PROTEIN S12 METHYLTHIOTRANSFERASE RIMO"/>
    <property type="match status" value="1"/>
</dbReference>
<dbReference type="PANTHER" id="PTHR43837:SF1">
    <property type="entry name" value="RIBOSOMAL PROTEIN US12 METHYLTHIOTRANSFERASE RIMO"/>
    <property type="match status" value="1"/>
</dbReference>
<dbReference type="Pfam" id="PF04055">
    <property type="entry name" value="Radical_SAM"/>
    <property type="match status" value="1"/>
</dbReference>
<dbReference type="Pfam" id="PF18693">
    <property type="entry name" value="TRAM_2"/>
    <property type="match status" value="1"/>
</dbReference>
<dbReference type="Pfam" id="PF00919">
    <property type="entry name" value="UPF0004"/>
    <property type="match status" value="1"/>
</dbReference>
<dbReference type="SFLD" id="SFLDG01082">
    <property type="entry name" value="B12-binding_domain_containing"/>
    <property type="match status" value="1"/>
</dbReference>
<dbReference type="SFLD" id="SFLDG01061">
    <property type="entry name" value="methylthiotransferase"/>
    <property type="match status" value="1"/>
</dbReference>
<dbReference type="SFLD" id="SFLDF00274">
    <property type="entry name" value="ribosomal_protein_S12_methylth"/>
    <property type="match status" value="1"/>
</dbReference>
<dbReference type="SMART" id="SM00729">
    <property type="entry name" value="Elp3"/>
    <property type="match status" value="1"/>
</dbReference>
<dbReference type="SUPFAM" id="SSF102114">
    <property type="entry name" value="Radical SAM enzymes"/>
    <property type="match status" value="1"/>
</dbReference>
<dbReference type="PROSITE" id="PS51449">
    <property type="entry name" value="MTTASE_N"/>
    <property type="match status" value="1"/>
</dbReference>
<dbReference type="PROSITE" id="PS01278">
    <property type="entry name" value="MTTASE_RADICAL"/>
    <property type="match status" value="1"/>
</dbReference>
<dbReference type="PROSITE" id="PS51918">
    <property type="entry name" value="RADICAL_SAM"/>
    <property type="match status" value="1"/>
</dbReference>
<evidence type="ECO:0000255" key="1">
    <source>
        <dbReference type="HAMAP-Rule" id="MF_01865"/>
    </source>
</evidence>
<evidence type="ECO:0000255" key="2">
    <source>
        <dbReference type="PROSITE-ProRule" id="PRU01266"/>
    </source>
</evidence>
<sequence>MTEQSNRVFLLSLGCSKNTVDSERLMAQAEAAGVVFTESASDAETIIINTCGFIADAKEESINETLAAITEKESGRVRKIFVMGCLPELYRSELQTELPEVDGFFGTRELPAILTAIGARYRSELHLHRSLTAPGHTSFLKISEGCSRSCSFCSIPRIRGPYISQPLDQLLREARLLQEKGVQELNIIAQDITLYGVDLYGRQMLNDLLLRLSDMAFHWIRLLYAYPLNFPLEVIETMSQRGNICNYLDLPLQHCNDRILRSMNRGITKEGELALIEAIRQKNPDIRLRTTMIAGYPGETRQEFEELLEFAATVRFDRLGCFSYCHEEFSPAFALEDSVPEEEKQSRTAELMELQEGISEEKNKRLEGREIAVCIDRIEENTAWGRTEWDAPEVDNECSLEGAGHTIAPGSFCLARIDGSSPYELFGTVLKVPE</sequence>
<feature type="chain" id="PRO_0000374937" description="Ribosomal protein uS12 methylthiotransferase RimO">
    <location>
        <begin position="1"/>
        <end position="434"/>
    </location>
</feature>
<feature type="domain" description="MTTase N-terminal" evidence="1">
    <location>
        <begin position="6"/>
        <end position="122"/>
    </location>
</feature>
<feature type="domain" description="Radical SAM core" evidence="2">
    <location>
        <begin position="132"/>
        <end position="361"/>
    </location>
</feature>
<feature type="domain" description="TRAM" evidence="1">
    <location>
        <begin position="364"/>
        <end position="431"/>
    </location>
</feature>
<feature type="binding site" evidence="1">
    <location>
        <position position="15"/>
    </location>
    <ligand>
        <name>[4Fe-4S] cluster</name>
        <dbReference type="ChEBI" id="CHEBI:49883"/>
        <label>1</label>
    </ligand>
</feature>
<feature type="binding site" evidence="1">
    <location>
        <position position="51"/>
    </location>
    <ligand>
        <name>[4Fe-4S] cluster</name>
        <dbReference type="ChEBI" id="CHEBI:49883"/>
        <label>1</label>
    </ligand>
</feature>
<feature type="binding site" evidence="1">
    <location>
        <position position="85"/>
    </location>
    <ligand>
        <name>[4Fe-4S] cluster</name>
        <dbReference type="ChEBI" id="CHEBI:49883"/>
        <label>1</label>
    </ligand>
</feature>
<feature type="binding site" evidence="1">
    <location>
        <position position="146"/>
    </location>
    <ligand>
        <name>[4Fe-4S] cluster</name>
        <dbReference type="ChEBI" id="CHEBI:49883"/>
        <label>2</label>
        <note>4Fe-4S-S-AdoMet</note>
    </ligand>
</feature>
<feature type="binding site" evidence="1">
    <location>
        <position position="150"/>
    </location>
    <ligand>
        <name>[4Fe-4S] cluster</name>
        <dbReference type="ChEBI" id="CHEBI:49883"/>
        <label>2</label>
        <note>4Fe-4S-S-AdoMet</note>
    </ligand>
</feature>
<feature type="binding site" evidence="1">
    <location>
        <position position="153"/>
    </location>
    <ligand>
        <name>[4Fe-4S] cluster</name>
        <dbReference type="ChEBI" id="CHEBI:49883"/>
        <label>2</label>
        <note>4Fe-4S-S-AdoMet</note>
    </ligand>
</feature>
<comment type="function">
    <text evidence="1">Catalyzes the methylthiolation of an aspartic acid residue of ribosomal protein uS12.</text>
</comment>
<comment type="catalytic activity">
    <reaction evidence="1">
        <text>L-aspartate(89)-[ribosomal protein uS12]-hydrogen + (sulfur carrier)-SH + AH2 + 2 S-adenosyl-L-methionine = 3-methylsulfanyl-L-aspartate(89)-[ribosomal protein uS12]-hydrogen + (sulfur carrier)-H + 5'-deoxyadenosine + L-methionine + A + S-adenosyl-L-homocysteine + 2 H(+)</text>
        <dbReference type="Rhea" id="RHEA:37087"/>
        <dbReference type="Rhea" id="RHEA-COMP:10460"/>
        <dbReference type="Rhea" id="RHEA-COMP:10461"/>
        <dbReference type="Rhea" id="RHEA-COMP:14737"/>
        <dbReference type="Rhea" id="RHEA-COMP:14739"/>
        <dbReference type="ChEBI" id="CHEBI:13193"/>
        <dbReference type="ChEBI" id="CHEBI:15378"/>
        <dbReference type="ChEBI" id="CHEBI:17319"/>
        <dbReference type="ChEBI" id="CHEBI:17499"/>
        <dbReference type="ChEBI" id="CHEBI:29917"/>
        <dbReference type="ChEBI" id="CHEBI:29961"/>
        <dbReference type="ChEBI" id="CHEBI:57844"/>
        <dbReference type="ChEBI" id="CHEBI:57856"/>
        <dbReference type="ChEBI" id="CHEBI:59789"/>
        <dbReference type="ChEBI" id="CHEBI:64428"/>
        <dbReference type="ChEBI" id="CHEBI:73599"/>
        <dbReference type="EC" id="2.8.4.4"/>
    </reaction>
</comment>
<comment type="cofactor">
    <cofactor evidence="1">
        <name>[4Fe-4S] cluster</name>
        <dbReference type="ChEBI" id="CHEBI:49883"/>
    </cofactor>
    <text evidence="1">Binds 2 [4Fe-4S] clusters. One cluster is coordinated with 3 cysteines and an exchangeable S-adenosyl-L-methionine.</text>
</comment>
<comment type="subcellular location">
    <subcellularLocation>
        <location evidence="1">Cytoplasm</location>
    </subcellularLocation>
</comment>
<comment type="similarity">
    <text evidence="1">Belongs to the methylthiotransferase family. RimO subfamily.</text>
</comment>
<gene>
    <name evidence="1" type="primary">rimO</name>
    <name type="ordered locus">Cvib_1224</name>
</gene>
<name>RIMO_CHLPM</name>